<protein>
    <recommendedName>
        <fullName evidence="1">tRNA 2-selenouridine synthase</fullName>
        <ecNumber evidence="1">2.9.1.3</ecNumber>
    </recommendedName>
</protein>
<accession>A6WHQ4</accession>
<gene>
    <name evidence="1" type="primary">selU</name>
    <name type="ordered locus">Shew185_0172</name>
</gene>
<comment type="function">
    <text evidence="1">Involved in the post-transcriptional modification of the uridine at the wobble position (U34) of tRNA(Lys), tRNA(Glu) and tRNA(Gln). Catalyzes the conversion of 2-thiouridine (S2U-RNA) to 2-selenouridine (Se2U-RNA). Acts in a two-step process involving geranylation of 2-thiouridine (S2U) to S-geranyl-2-thiouridine (geS2U) and subsequent selenation of the latter derivative to 2-selenouridine (Se2U) in the tRNA chain.</text>
</comment>
<comment type="catalytic activity">
    <reaction evidence="1">
        <text>5-methylaminomethyl-2-thiouridine(34) in tRNA + selenophosphate + (2E)-geranyl diphosphate + H2O + H(+) = 5-methylaminomethyl-2-selenouridine(34) in tRNA + (2E)-thiogeraniol + phosphate + diphosphate</text>
        <dbReference type="Rhea" id="RHEA:42716"/>
        <dbReference type="Rhea" id="RHEA-COMP:10195"/>
        <dbReference type="Rhea" id="RHEA-COMP:10196"/>
        <dbReference type="ChEBI" id="CHEBI:15377"/>
        <dbReference type="ChEBI" id="CHEBI:15378"/>
        <dbReference type="ChEBI" id="CHEBI:16144"/>
        <dbReference type="ChEBI" id="CHEBI:33019"/>
        <dbReference type="ChEBI" id="CHEBI:43474"/>
        <dbReference type="ChEBI" id="CHEBI:58057"/>
        <dbReference type="ChEBI" id="CHEBI:74455"/>
        <dbReference type="ChEBI" id="CHEBI:82743"/>
        <dbReference type="ChEBI" id="CHEBI:143703"/>
        <dbReference type="EC" id="2.9.1.3"/>
    </reaction>
    <physiologicalReaction direction="left-to-right" evidence="1">
        <dbReference type="Rhea" id="RHEA:42717"/>
    </physiologicalReaction>
</comment>
<comment type="catalytic activity">
    <reaction evidence="1">
        <text>5-methylaminomethyl-2-thiouridine(34) in tRNA + (2E)-geranyl diphosphate = 5-methylaminomethyl-S-(2E)-geranyl-thiouridine(34) in tRNA + diphosphate</text>
        <dbReference type="Rhea" id="RHEA:14085"/>
        <dbReference type="Rhea" id="RHEA-COMP:10195"/>
        <dbReference type="Rhea" id="RHEA-COMP:14654"/>
        <dbReference type="ChEBI" id="CHEBI:33019"/>
        <dbReference type="ChEBI" id="CHEBI:58057"/>
        <dbReference type="ChEBI" id="CHEBI:74455"/>
        <dbReference type="ChEBI" id="CHEBI:140632"/>
    </reaction>
    <physiologicalReaction direction="left-to-right" evidence="1">
        <dbReference type="Rhea" id="RHEA:14086"/>
    </physiologicalReaction>
</comment>
<comment type="catalytic activity">
    <reaction evidence="1">
        <text>5-methylaminomethyl-S-(2E)-geranyl-thiouridine(34) in tRNA + selenophosphate + H(+) = 5-methylaminomethyl-2-(Se-phospho)selenouridine(34) in tRNA + (2E)-thiogeraniol</text>
        <dbReference type="Rhea" id="RHEA:60172"/>
        <dbReference type="Rhea" id="RHEA-COMP:14654"/>
        <dbReference type="Rhea" id="RHEA-COMP:15523"/>
        <dbReference type="ChEBI" id="CHEBI:15378"/>
        <dbReference type="ChEBI" id="CHEBI:16144"/>
        <dbReference type="ChEBI" id="CHEBI:140632"/>
        <dbReference type="ChEBI" id="CHEBI:143702"/>
        <dbReference type="ChEBI" id="CHEBI:143703"/>
    </reaction>
    <physiologicalReaction direction="left-to-right" evidence="1">
        <dbReference type="Rhea" id="RHEA:60173"/>
    </physiologicalReaction>
</comment>
<comment type="catalytic activity">
    <reaction evidence="1">
        <text>5-methylaminomethyl-2-(Se-phospho)selenouridine(34) in tRNA + H2O = 5-methylaminomethyl-2-selenouridine(34) in tRNA + phosphate</text>
        <dbReference type="Rhea" id="RHEA:60176"/>
        <dbReference type="Rhea" id="RHEA-COMP:10196"/>
        <dbReference type="Rhea" id="RHEA-COMP:15523"/>
        <dbReference type="ChEBI" id="CHEBI:15377"/>
        <dbReference type="ChEBI" id="CHEBI:43474"/>
        <dbReference type="ChEBI" id="CHEBI:82743"/>
        <dbReference type="ChEBI" id="CHEBI:143702"/>
    </reaction>
    <physiologicalReaction direction="left-to-right" evidence="1">
        <dbReference type="Rhea" id="RHEA:60177"/>
    </physiologicalReaction>
</comment>
<comment type="subunit">
    <text evidence="1">Monomer.</text>
</comment>
<comment type="similarity">
    <text evidence="1">Belongs to the SelU family.</text>
</comment>
<sequence length="368" mass="41746">MPNAIVAAEQYREIFLNQHPIMDVRAPIEFTRGAFPNSTNLPLMLDSEREKVGTCYKQSGQQAAIALGHSLVNGPIKQQRIEAWTSYVKANPNAYLYCFRGGLRSQLTQQWLKEAGVEVPYIQGGYKAMRQYLIGVIEAAPIQQPLLSLSGMTGCGKTDFLLQRKEAVDLEGIANHRGSSFGKNIDPQPTQINFENQLAIALLQHQTSGVACLLLEDESFLIGRSALPQTFYNAMQAANVLVLEESDDARLERLRNEYVHKMYSGFCERLGPEAGFAAFSDYLLQSLVSIRKRLGGKQHQELQDLMQQALDQQINQNDTSLHLVWINLLLHKYYDPMYLYQLDKKSERVLFKGSHQAMHEWLDSYQTR</sequence>
<evidence type="ECO:0000255" key="1">
    <source>
        <dbReference type="HAMAP-Rule" id="MF_01622"/>
    </source>
</evidence>
<name>SELU_SHEB8</name>
<organism>
    <name type="scientific">Shewanella baltica (strain OS185)</name>
    <dbReference type="NCBI Taxonomy" id="402882"/>
    <lineage>
        <taxon>Bacteria</taxon>
        <taxon>Pseudomonadati</taxon>
        <taxon>Pseudomonadota</taxon>
        <taxon>Gammaproteobacteria</taxon>
        <taxon>Alteromonadales</taxon>
        <taxon>Shewanellaceae</taxon>
        <taxon>Shewanella</taxon>
    </lineage>
</organism>
<keyword id="KW-0711">Selenium</keyword>
<keyword id="KW-0808">Transferase</keyword>
<reference key="1">
    <citation type="submission" date="2007-07" db="EMBL/GenBank/DDBJ databases">
        <title>Complete sequence of chromosome of Shewanella baltica OS185.</title>
        <authorList>
            <consortium name="US DOE Joint Genome Institute"/>
            <person name="Copeland A."/>
            <person name="Lucas S."/>
            <person name="Lapidus A."/>
            <person name="Barry K."/>
            <person name="Glavina del Rio T."/>
            <person name="Dalin E."/>
            <person name="Tice H."/>
            <person name="Pitluck S."/>
            <person name="Sims D."/>
            <person name="Brettin T."/>
            <person name="Bruce D."/>
            <person name="Detter J.C."/>
            <person name="Han C."/>
            <person name="Schmutz J."/>
            <person name="Larimer F."/>
            <person name="Land M."/>
            <person name="Hauser L."/>
            <person name="Kyrpides N."/>
            <person name="Mikhailova N."/>
            <person name="Brettar I."/>
            <person name="Rodrigues J."/>
            <person name="Konstantinidis K."/>
            <person name="Tiedje J."/>
            <person name="Richardson P."/>
        </authorList>
    </citation>
    <scope>NUCLEOTIDE SEQUENCE [LARGE SCALE GENOMIC DNA]</scope>
    <source>
        <strain>OS185</strain>
    </source>
</reference>
<proteinExistence type="inferred from homology"/>
<feature type="chain" id="PRO_1000069593" description="tRNA 2-selenouridine synthase">
    <location>
        <begin position="1"/>
        <end position="368"/>
    </location>
</feature>
<feature type="domain" description="Rhodanese" evidence="1">
    <location>
        <begin position="15"/>
        <end position="138"/>
    </location>
</feature>
<feature type="active site" description="S-selanylcysteine intermediate" evidence="1">
    <location>
        <position position="98"/>
    </location>
</feature>
<dbReference type="EC" id="2.9.1.3" evidence="1"/>
<dbReference type="EMBL" id="CP000753">
    <property type="protein sequence ID" value="ABS06343.1"/>
    <property type="molecule type" value="Genomic_DNA"/>
</dbReference>
<dbReference type="RefSeq" id="WP_011982108.1">
    <property type="nucleotide sequence ID" value="NC_009665.1"/>
</dbReference>
<dbReference type="SMR" id="A6WHQ4"/>
<dbReference type="KEGG" id="sbm:Shew185_0172"/>
<dbReference type="HOGENOM" id="CLU_043456_1_0_6"/>
<dbReference type="GO" id="GO:0016765">
    <property type="term" value="F:transferase activity, transferring alkyl or aryl (other than methyl) groups"/>
    <property type="evidence" value="ECO:0007669"/>
    <property type="project" value="UniProtKB-UniRule"/>
</dbReference>
<dbReference type="GO" id="GO:0043828">
    <property type="term" value="F:tRNA 2-selenouridine synthase activity"/>
    <property type="evidence" value="ECO:0007669"/>
    <property type="project" value="UniProtKB-EC"/>
</dbReference>
<dbReference type="GO" id="GO:0002098">
    <property type="term" value="P:tRNA wobble uridine modification"/>
    <property type="evidence" value="ECO:0007669"/>
    <property type="project" value="UniProtKB-UniRule"/>
</dbReference>
<dbReference type="CDD" id="cd01520">
    <property type="entry name" value="RHOD_YbbB"/>
    <property type="match status" value="1"/>
</dbReference>
<dbReference type="Gene3D" id="3.40.250.10">
    <property type="entry name" value="Rhodanese-like domain"/>
    <property type="match status" value="1"/>
</dbReference>
<dbReference type="HAMAP" id="MF_01622">
    <property type="entry name" value="tRNA_sel_U_synth"/>
    <property type="match status" value="1"/>
</dbReference>
<dbReference type="InterPro" id="IPR001763">
    <property type="entry name" value="Rhodanese-like_dom"/>
</dbReference>
<dbReference type="InterPro" id="IPR036873">
    <property type="entry name" value="Rhodanese-like_dom_sf"/>
</dbReference>
<dbReference type="InterPro" id="IPR017582">
    <property type="entry name" value="SelU"/>
</dbReference>
<dbReference type="NCBIfam" id="NF008750">
    <property type="entry name" value="PRK11784.1-2"/>
    <property type="match status" value="1"/>
</dbReference>
<dbReference type="NCBIfam" id="NF008751">
    <property type="entry name" value="PRK11784.1-3"/>
    <property type="match status" value="1"/>
</dbReference>
<dbReference type="NCBIfam" id="TIGR03167">
    <property type="entry name" value="tRNA_sel_U_synt"/>
    <property type="match status" value="1"/>
</dbReference>
<dbReference type="PANTHER" id="PTHR30401">
    <property type="entry name" value="TRNA 2-SELENOURIDINE SYNTHASE"/>
    <property type="match status" value="1"/>
</dbReference>
<dbReference type="PANTHER" id="PTHR30401:SF0">
    <property type="entry name" value="TRNA 2-SELENOURIDINE SYNTHASE"/>
    <property type="match status" value="1"/>
</dbReference>
<dbReference type="Pfam" id="PF00581">
    <property type="entry name" value="Rhodanese"/>
    <property type="match status" value="1"/>
</dbReference>
<dbReference type="SMART" id="SM00450">
    <property type="entry name" value="RHOD"/>
    <property type="match status" value="1"/>
</dbReference>
<dbReference type="SUPFAM" id="SSF52821">
    <property type="entry name" value="Rhodanese/Cell cycle control phosphatase"/>
    <property type="match status" value="1"/>
</dbReference>
<dbReference type="PROSITE" id="PS50206">
    <property type="entry name" value="RHODANESE_3"/>
    <property type="match status" value="1"/>
</dbReference>